<evidence type="ECO:0000255" key="1">
    <source>
        <dbReference type="HAMAP-Rule" id="MF_01603"/>
    </source>
</evidence>
<feature type="chain" id="PRO_0000080102" description="Bifunctional protein HldE">
    <location>
        <begin position="1"/>
        <end position="494"/>
    </location>
</feature>
<feature type="region of interest" description="Ribokinase">
    <location>
        <begin position="1"/>
        <end position="334"/>
    </location>
</feature>
<feature type="region of interest" description="Cytidylyltransferase">
    <location>
        <begin position="362"/>
        <end position="494"/>
    </location>
</feature>
<feature type="active site" evidence="1">
    <location>
        <position position="279"/>
    </location>
</feature>
<feature type="binding site" evidence="1">
    <location>
        <begin position="209"/>
        <end position="212"/>
    </location>
    <ligand>
        <name>ATP</name>
        <dbReference type="ChEBI" id="CHEBI:30616"/>
    </ligand>
</feature>
<gene>
    <name evidence="1" type="primary">hldE</name>
    <name type="synonym">rfaE</name>
    <name type="ordered locus">bll5927</name>
</gene>
<sequence>MPTPILDFDALAQTISGRTVLCIGDIMLDEFVYGEVSRISPEAPTPVIVAQRSEIHIGGAGNVARNVASLGARCIFVGLVGEDDAGKRLAAALADQAAIESVLVCDPSRPTTRKVRFVSEHFSTHMLRADWEQAQPASDEVEAKLIEAILPQIARADIVLLSDYAKGVLTARVIRHTIDAARKLGKPVIVDPKSLNWAIYRGATLLTPNRKEFAEATRSRADTPQSIVDASEDVMRLADCEAILVTQGEHGMTLVPRNGAAVHVPAVPVKVRDVSGAGDTVAAALAVSLAAGADWDTALRVANAAASVAVSKLGTAIVSTAELRRKILPHAYLAAEEKIVLEPAALDAQLAEWRTQGLRVGFTNGCFDILHPGHVKVLTAARGACDRLVVGLNSDASVRRLKGADRPVQDERARAEVLAALEAVDLVVIFEEDTPIDLITRIKPAALVKGGDYTREQVVGHEVVEAAGGVVVLVDILQGFSTTALVHRARGGAK</sequence>
<protein>
    <recommendedName>
        <fullName evidence="1">Bifunctional protein HldE</fullName>
    </recommendedName>
    <domain>
        <recommendedName>
            <fullName evidence="1">D-beta-D-heptose 7-phosphate kinase</fullName>
            <ecNumber evidence="1">2.7.1.167</ecNumber>
        </recommendedName>
        <alternativeName>
            <fullName evidence="1">D-beta-D-heptose 7-phosphotransferase</fullName>
        </alternativeName>
        <alternativeName>
            <fullName evidence="1">D-glycero-beta-D-manno-heptose-7-phosphate kinase</fullName>
        </alternativeName>
    </domain>
    <domain>
        <recommendedName>
            <fullName evidence="1">D-beta-D-heptose 1-phosphate adenylyltransferase</fullName>
            <ecNumber evidence="1">2.7.7.70</ecNumber>
        </recommendedName>
        <alternativeName>
            <fullName evidence="1">D-glycero-beta-D-manno-heptose 1-phosphate adenylyltransferase</fullName>
        </alternativeName>
    </domain>
</protein>
<keyword id="KW-0067">ATP-binding</keyword>
<keyword id="KW-0119">Carbohydrate metabolism</keyword>
<keyword id="KW-0418">Kinase</keyword>
<keyword id="KW-0511">Multifunctional enzyme</keyword>
<keyword id="KW-0547">Nucleotide-binding</keyword>
<keyword id="KW-0548">Nucleotidyltransferase</keyword>
<keyword id="KW-1185">Reference proteome</keyword>
<keyword id="KW-0808">Transferase</keyword>
<accession>Q89HR3</accession>
<organism>
    <name type="scientific">Bradyrhizobium diazoefficiens (strain JCM 10833 / BCRC 13528 / IAM 13628 / NBRC 14792 / USDA 110)</name>
    <dbReference type="NCBI Taxonomy" id="224911"/>
    <lineage>
        <taxon>Bacteria</taxon>
        <taxon>Pseudomonadati</taxon>
        <taxon>Pseudomonadota</taxon>
        <taxon>Alphaproteobacteria</taxon>
        <taxon>Hyphomicrobiales</taxon>
        <taxon>Nitrobacteraceae</taxon>
        <taxon>Bradyrhizobium</taxon>
    </lineage>
</organism>
<reference key="1">
    <citation type="journal article" date="2002" name="DNA Res.">
        <title>Complete genomic sequence of nitrogen-fixing symbiotic bacterium Bradyrhizobium japonicum USDA110.</title>
        <authorList>
            <person name="Kaneko T."/>
            <person name="Nakamura Y."/>
            <person name="Sato S."/>
            <person name="Minamisawa K."/>
            <person name="Uchiumi T."/>
            <person name="Sasamoto S."/>
            <person name="Watanabe A."/>
            <person name="Idesawa K."/>
            <person name="Iriguchi M."/>
            <person name="Kawashima K."/>
            <person name="Kohara M."/>
            <person name="Matsumoto M."/>
            <person name="Shimpo S."/>
            <person name="Tsuruoka H."/>
            <person name="Wada T."/>
            <person name="Yamada M."/>
            <person name="Tabata S."/>
        </authorList>
    </citation>
    <scope>NUCLEOTIDE SEQUENCE [LARGE SCALE GENOMIC DNA]</scope>
    <source>
        <strain>JCM 10833 / BCRC 13528 / IAM 13628 / NBRC 14792 / USDA 110</strain>
    </source>
</reference>
<proteinExistence type="inferred from homology"/>
<comment type="function">
    <text evidence="1">Catalyzes the phosphorylation of D-glycero-D-manno-heptose 7-phosphate at the C-1 position to selectively form D-glycero-beta-D-manno-heptose-1,7-bisphosphate.</text>
</comment>
<comment type="function">
    <text evidence="1">Catalyzes the ADP transfer from ATP to D-glycero-beta-D-manno-heptose 1-phosphate, yielding ADP-D-glycero-beta-D-manno-heptose.</text>
</comment>
<comment type="catalytic activity">
    <reaction evidence="1">
        <text>D-glycero-beta-D-manno-heptose 7-phosphate + ATP = D-glycero-beta-D-manno-heptose 1,7-bisphosphate + ADP + H(+)</text>
        <dbReference type="Rhea" id="RHEA:27473"/>
        <dbReference type="ChEBI" id="CHEBI:15378"/>
        <dbReference type="ChEBI" id="CHEBI:30616"/>
        <dbReference type="ChEBI" id="CHEBI:60204"/>
        <dbReference type="ChEBI" id="CHEBI:60208"/>
        <dbReference type="ChEBI" id="CHEBI:456216"/>
        <dbReference type="EC" id="2.7.1.167"/>
    </reaction>
</comment>
<comment type="catalytic activity">
    <reaction evidence="1">
        <text>D-glycero-beta-D-manno-heptose 1-phosphate + ATP + H(+) = ADP-D-glycero-beta-D-manno-heptose + diphosphate</text>
        <dbReference type="Rhea" id="RHEA:27465"/>
        <dbReference type="ChEBI" id="CHEBI:15378"/>
        <dbReference type="ChEBI" id="CHEBI:30616"/>
        <dbReference type="ChEBI" id="CHEBI:33019"/>
        <dbReference type="ChEBI" id="CHEBI:59967"/>
        <dbReference type="ChEBI" id="CHEBI:61593"/>
        <dbReference type="EC" id="2.7.7.70"/>
    </reaction>
</comment>
<comment type="pathway">
    <text evidence="1">Nucleotide-sugar biosynthesis; ADP-L-glycero-beta-D-manno-heptose biosynthesis; ADP-L-glycero-beta-D-manno-heptose from D-glycero-beta-D-manno-heptose 7-phosphate: step 1/4.</text>
</comment>
<comment type="pathway">
    <text evidence="1">Nucleotide-sugar biosynthesis; ADP-L-glycero-beta-D-manno-heptose biosynthesis; ADP-L-glycero-beta-D-manno-heptose from D-glycero-beta-D-manno-heptose 7-phosphate: step 3/4.</text>
</comment>
<comment type="subunit">
    <text evidence="1">Homodimer.</text>
</comment>
<comment type="similarity">
    <text evidence="1">In the N-terminal section; belongs to the carbohydrate kinase PfkB family.</text>
</comment>
<comment type="similarity">
    <text evidence="1">In the C-terminal section; belongs to the cytidylyltransferase family.</text>
</comment>
<name>HLDE_BRADU</name>
<dbReference type="EC" id="2.7.1.167" evidence="1"/>
<dbReference type="EC" id="2.7.7.70" evidence="1"/>
<dbReference type="EMBL" id="BA000040">
    <property type="protein sequence ID" value="BAC51192.1"/>
    <property type="molecule type" value="Genomic_DNA"/>
</dbReference>
<dbReference type="RefSeq" id="NP_772567.1">
    <property type="nucleotide sequence ID" value="NC_004463.1"/>
</dbReference>
<dbReference type="RefSeq" id="WP_011088668.1">
    <property type="nucleotide sequence ID" value="NC_004463.1"/>
</dbReference>
<dbReference type="SMR" id="Q89HR3"/>
<dbReference type="FunCoup" id="Q89HR3">
    <property type="interactions" value="349"/>
</dbReference>
<dbReference type="STRING" id="224911.AAV28_27175"/>
<dbReference type="EnsemblBacteria" id="BAC51192">
    <property type="protein sequence ID" value="BAC51192"/>
    <property type="gene ID" value="BAC51192"/>
</dbReference>
<dbReference type="GeneID" id="46492924"/>
<dbReference type="KEGG" id="bja:bll5927"/>
<dbReference type="PATRIC" id="fig|224911.44.peg.5876"/>
<dbReference type="eggNOG" id="COG0615">
    <property type="taxonomic scope" value="Bacteria"/>
</dbReference>
<dbReference type="eggNOG" id="COG2870">
    <property type="taxonomic scope" value="Bacteria"/>
</dbReference>
<dbReference type="HOGENOM" id="CLU_021150_2_1_5"/>
<dbReference type="InParanoid" id="Q89HR3"/>
<dbReference type="OrthoDB" id="9802794at2"/>
<dbReference type="PhylomeDB" id="Q89HR3"/>
<dbReference type="UniPathway" id="UPA00356">
    <property type="reaction ID" value="UER00437"/>
</dbReference>
<dbReference type="UniPathway" id="UPA00356">
    <property type="reaction ID" value="UER00439"/>
</dbReference>
<dbReference type="Proteomes" id="UP000002526">
    <property type="component" value="Chromosome"/>
</dbReference>
<dbReference type="GO" id="GO:0005829">
    <property type="term" value="C:cytosol"/>
    <property type="evidence" value="ECO:0000318"/>
    <property type="project" value="GO_Central"/>
</dbReference>
<dbReference type="GO" id="GO:0005524">
    <property type="term" value="F:ATP binding"/>
    <property type="evidence" value="ECO:0007669"/>
    <property type="project" value="UniProtKB-UniRule"/>
</dbReference>
<dbReference type="GO" id="GO:0033785">
    <property type="term" value="F:heptose 7-phosphate kinase activity"/>
    <property type="evidence" value="ECO:0000318"/>
    <property type="project" value="GO_Central"/>
</dbReference>
<dbReference type="GO" id="GO:0033786">
    <property type="term" value="F:heptose-1-phosphate adenylyltransferase activity"/>
    <property type="evidence" value="ECO:0000318"/>
    <property type="project" value="GO_Central"/>
</dbReference>
<dbReference type="GO" id="GO:0016773">
    <property type="term" value="F:phosphotransferase activity, alcohol group as acceptor"/>
    <property type="evidence" value="ECO:0007669"/>
    <property type="project" value="InterPro"/>
</dbReference>
<dbReference type="GO" id="GO:0097171">
    <property type="term" value="P:ADP-L-glycero-beta-D-manno-heptose biosynthetic process"/>
    <property type="evidence" value="ECO:0007669"/>
    <property type="project" value="UniProtKB-UniPathway"/>
</dbReference>
<dbReference type="CDD" id="cd01172">
    <property type="entry name" value="RfaE_like"/>
    <property type="match status" value="1"/>
</dbReference>
<dbReference type="Gene3D" id="3.40.1190.20">
    <property type="match status" value="1"/>
</dbReference>
<dbReference type="Gene3D" id="3.40.50.620">
    <property type="entry name" value="HUPs"/>
    <property type="match status" value="1"/>
</dbReference>
<dbReference type="HAMAP" id="MF_01603">
    <property type="entry name" value="HldE"/>
    <property type="match status" value="1"/>
</dbReference>
<dbReference type="InterPro" id="IPR023030">
    <property type="entry name" value="Bifunc_HldE"/>
</dbReference>
<dbReference type="InterPro" id="IPR002173">
    <property type="entry name" value="Carboh/pur_kinase_PfkB_CS"/>
</dbReference>
<dbReference type="InterPro" id="IPR004821">
    <property type="entry name" value="Cyt_trans-like"/>
</dbReference>
<dbReference type="InterPro" id="IPR011611">
    <property type="entry name" value="PfkB_dom"/>
</dbReference>
<dbReference type="InterPro" id="IPR011913">
    <property type="entry name" value="RfaE_dom_I"/>
</dbReference>
<dbReference type="InterPro" id="IPR011914">
    <property type="entry name" value="RfaE_dom_II"/>
</dbReference>
<dbReference type="InterPro" id="IPR029056">
    <property type="entry name" value="Ribokinase-like"/>
</dbReference>
<dbReference type="InterPro" id="IPR014729">
    <property type="entry name" value="Rossmann-like_a/b/a_fold"/>
</dbReference>
<dbReference type="NCBIfam" id="TIGR00125">
    <property type="entry name" value="cyt_tran_rel"/>
    <property type="match status" value="1"/>
</dbReference>
<dbReference type="NCBIfam" id="TIGR02198">
    <property type="entry name" value="rfaE_dom_I"/>
    <property type="match status" value="1"/>
</dbReference>
<dbReference type="NCBIfam" id="TIGR02199">
    <property type="entry name" value="rfaE_dom_II"/>
    <property type="match status" value="1"/>
</dbReference>
<dbReference type="PANTHER" id="PTHR46969">
    <property type="entry name" value="BIFUNCTIONAL PROTEIN HLDE"/>
    <property type="match status" value="1"/>
</dbReference>
<dbReference type="PANTHER" id="PTHR46969:SF1">
    <property type="entry name" value="BIFUNCTIONAL PROTEIN HLDE"/>
    <property type="match status" value="1"/>
</dbReference>
<dbReference type="Pfam" id="PF01467">
    <property type="entry name" value="CTP_transf_like"/>
    <property type="match status" value="1"/>
</dbReference>
<dbReference type="Pfam" id="PF00294">
    <property type="entry name" value="PfkB"/>
    <property type="match status" value="1"/>
</dbReference>
<dbReference type="SUPFAM" id="SSF52374">
    <property type="entry name" value="Nucleotidylyl transferase"/>
    <property type="match status" value="1"/>
</dbReference>
<dbReference type="SUPFAM" id="SSF53613">
    <property type="entry name" value="Ribokinase-like"/>
    <property type="match status" value="1"/>
</dbReference>
<dbReference type="PROSITE" id="PS00583">
    <property type="entry name" value="PFKB_KINASES_1"/>
    <property type="match status" value="1"/>
</dbReference>
<dbReference type="PROSITE" id="PS00584">
    <property type="entry name" value="PFKB_KINASES_2"/>
    <property type="match status" value="1"/>
</dbReference>